<organism>
    <name type="scientific">Ehrlichia ruminantium (strain Welgevonden)</name>
    <dbReference type="NCBI Taxonomy" id="254945"/>
    <lineage>
        <taxon>Bacteria</taxon>
        <taxon>Pseudomonadati</taxon>
        <taxon>Pseudomonadota</taxon>
        <taxon>Alphaproteobacteria</taxon>
        <taxon>Rickettsiales</taxon>
        <taxon>Anaplasmataceae</taxon>
        <taxon>Ehrlichia</taxon>
    </lineage>
</organism>
<reference key="1">
    <citation type="journal article" date="2005" name="Proc. Natl. Acad. Sci. U.S.A.">
        <title>The genome of the heartwater agent Ehrlichia ruminantium contains multiple tandem repeats of actively variable copy number.</title>
        <authorList>
            <person name="Collins N.E."/>
            <person name="Liebenberg J."/>
            <person name="de Villiers E.P."/>
            <person name="Brayton K.A."/>
            <person name="Louw E."/>
            <person name="Pretorius A."/>
            <person name="Faber F.E."/>
            <person name="van Heerden H."/>
            <person name="Josemans A."/>
            <person name="van Kleef M."/>
            <person name="Steyn H.C."/>
            <person name="van Strijp M.F."/>
            <person name="Zweygarth E."/>
            <person name="Jongejan F."/>
            <person name="Maillard J.C."/>
            <person name="Berthier D."/>
            <person name="Botha M."/>
            <person name="Joubert F."/>
            <person name="Corton C.H."/>
            <person name="Thomson N.R."/>
            <person name="Allsopp M.T."/>
            <person name="Allsopp B.A."/>
        </authorList>
    </citation>
    <scope>NUCLEOTIDE SEQUENCE [LARGE SCALE GENOMIC DNA]</scope>
    <source>
        <strain>Welgevonden</strain>
    </source>
</reference>
<feature type="chain" id="PRO_1000197870" description="Sec-independent protein translocase protein TatA">
    <location>
        <begin position="1"/>
        <end position="56"/>
    </location>
</feature>
<feature type="transmembrane region" description="Helical" evidence="1">
    <location>
        <begin position="1"/>
        <end position="21"/>
    </location>
</feature>
<evidence type="ECO:0000255" key="1">
    <source>
        <dbReference type="HAMAP-Rule" id="MF_00236"/>
    </source>
</evidence>
<accession>Q5HBS1</accession>
<protein>
    <recommendedName>
        <fullName evidence="1">Sec-independent protein translocase protein TatA</fullName>
    </recommendedName>
</protein>
<proteinExistence type="inferred from homology"/>
<comment type="function">
    <text evidence="1">Part of the twin-arginine translocation (Tat) system that transports large folded proteins containing a characteristic twin-arginine motif in their signal peptide across membranes. TatA could form the protein-conducting channel of the Tat system.</text>
</comment>
<comment type="subunit">
    <text evidence="1">The Tat system comprises two distinct complexes: a TatABC complex, containing multiple copies of TatA, TatB and TatC subunits, and a separate TatA complex, containing only TatA subunits. Substrates initially bind to the TatABC complex, which probably triggers association of the separate TatA complex to form the active translocon.</text>
</comment>
<comment type="subcellular location">
    <subcellularLocation>
        <location evidence="1">Cell inner membrane</location>
        <topology evidence="1">Single-pass membrane protein</topology>
    </subcellularLocation>
</comment>
<comment type="similarity">
    <text evidence="1">Belongs to the TatA/E family.</text>
</comment>
<keyword id="KW-0997">Cell inner membrane</keyword>
<keyword id="KW-1003">Cell membrane</keyword>
<keyword id="KW-0472">Membrane</keyword>
<keyword id="KW-0653">Protein transport</keyword>
<keyword id="KW-0811">Translocation</keyword>
<keyword id="KW-0812">Transmembrane</keyword>
<keyword id="KW-1133">Transmembrane helix</keyword>
<keyword id="KW-0813">Transport</keyword>
<name>TATA_EHRRW</name>
<gene>
    <name evidence="1" type="primary">tatA</name>
    <name type="ordered locus">Erum2560</name>
</gene>
<dbReference type="EMBL" id="CR767821">
    <property type="protein sequence ID" value="CAH57973.1"/>
    <property type="molecule type" value="Genomic_DNA"/>
</dbReference>
<dbReference type="RefSeq" id="WP_011154940.1">
    <property type="nucleotide sequence ID" value="NC_005295.2"/>
</dbReference>
<dbReference type="SMR" id="Q5HBS1"/>
<dbReference type="GeneID" id="33058273"/>
<dbReference type="KEGG" id="eru:Erum2560"/>
<dbReference type="eggNOG" id="COG1826">
    <property type="taxonomic scope" value="Bacteria"/>
</dbReference>
<dbReference type="GO" id="GO:0033281">
    <property type="term" value="C:TAT protein transport complex"/>
    <property type="evidence" value="ECO:0007669"/>
    <property type="project" value="UniProtKB-UniRule"/>
</dbReference>
<dbReference type="GO" id="GO:0008320">
    <property type="term" value="F:protein transmembrane transporter activity"/>
    <property type="evidence" value="ECO:0007669"/>
    <property type="project" value="UniProtKB-UniRule"/>
</dbReference>
<dbReference type="GO" id="GO:0043953">
    <property type="term" value="P:protein transport by the Tat complex"/>
    <property type="evidence" value="ECO:0007669"/>
    <property type="project" value="UniProtKB-UniRule"/>
</dbReference>
<dbReference type="Gene3D" id="1.20.5.3310">
    <property type="match status" value="1"/>
</dbReference>
<dbReference type="HAMAP" id="MF_00236">
    <property type="entry name" value="TatA_E"/>
    <property type="match status" value="1"/>
</dbReference>
<dbReference type="InterPro" id="IPR003369">
    <property type="entry name" value="TatA/B/E"/>
</dbReference>
<dbReference type="InterPro" id="IPR006312">
    <property type="entry name" value="TatA/E"/>
</dbReference>
<dbReference type="NCBIfam" id="TIGR01411">
    <property type="entry name" value="tatAE"/>
    <property type="match status" value="1"/>
</dbReference>
<dbReference type="PANTHER" id="PTHR42982">
    <property type="entry name" value="SEC-INDEPENDENT PROTEIN TRANSLOCASE PROTEIN TATA"/>
    <property type="match status" value="1"/>
</dbReference>
<dbReference type="PANTHER" id="PTHR42982:SF8">
    <property type="entry name" value="SEC-INDEPENDENT PROTEIN TRANSLOCASE PROTEIN TATA"/>
    <property type="match status" value="1"/>
</dbReference>
<dbReference type="Pfam" id="PF02416">
    <property type="entry name" value="TatA_B_E"/>
    <property type="match status" value="1"/>
</dbReference>
<sequence length="56" mass="6167">MALGPWQIFLILVIILVLFGAGKLPDVMSDLGKGIRNLKQELKDNKLASTEDESNL</sequence>